<accession>P39689</accession>
<dbReference type="EMBL" id="U09507">
    <property type="protein sequence ID" value="AAB60456.1"/>
    <property type="molecule type" value="mRNA"/>
</dbReference>
<dbReference type="EMBL" id="U24173">
    <property type="protein sequence ID" value="AAC52220.1"/>
    <property type="molecule type" value="mRNA"/>
</dbReference>
<dbReference type="EMBL" id="BC002043">
    <property type="protein sequence ID" value="AAH02043.1"/>
    <property type="molecule type" value="mRNA"/>
</dbReference>
<dbReference type="CCDS" id="CCDS28591.1"/>
<dbReference type="PIR" id="A49438">
    <property type="entry name" value="A49438"/>
</dbReference>
<dbReference type="PIR" id="I49023">
    <property type="entry name" value="I49023"/>
</dbReference>
<dbReference type="RefSeq" id="NP_001104569.1">
    <property type="nucleotide sequence ID" value="NM_001111099.2"/>
</dbReference>
<dbReference type="RefSeq" id="NP_031695.1">
    <property type="nucleotide sequence ID" value="NM_007669.5"/>
</dbReference>
<dbReference type="SMR" id="P39689"/>
<dbReference type="BioGRID" id="198651">
    <property type="interactions" value="17"/>
</dbReference>
<dbReference type="CORUM" id="P39689"/>
<dbReference type="DIP" id="DIP-24178N"/>
<dbReference type="ELM" id="P39689"/>
<dbReference type="FunCoup" id="P39689">
    <property type="interactions" value="1693"/>
</dbReference>
<dbReference type="IntAct" id="P39689">
    <property type="interactions" value="4"/>
</dbReference>
<dbReference type="MINT" id="P39689"/>
<dbReference type="STRING" id="10090.ENSMUSP00000156559"/>
<dbReference type="iPTMnet" id="P39689"/>
<dbReference type="PhosphoSitePlus" id="P39689"/>
<dbReference type="PaxDb" id="10090-ENSMUSP00000023829"/>
<dbReference type="PeptideAtlas" id="P39689"/>
<dbReference type="ProteomicsDB" id="281569"/>
<dbReference type="Pumba" id="P39689"/>
<dbReference type="Antibodypedia" id="3757">
    <property type="antibodies" value="2484 antibodies from 47 providers"/>
</dbReference>
<dbReference type="DNASU" id="12575"/>
<dbReference type="Ensembl" id="ENSMUST00000023829.8">
    <property type="protein sequence ID" value="ENSMUSP00000023829.7"/>
    <property type="gene ID" value="ENSMUSG00000023067.15"/>
</dbReference>
<dbReference type="Ensembl" id="ENSMUST00000119901.9">
    <property type="protein sequence ID" value="ENSMUSP00000113150.2"/>
    <property type="gene ID" value="ENSMUSG00000023067.15"/>
</dbReference>
<dbReference type="Ensembl" id="ENSMUST00000122348.3">
    <property type="protein sequence ID" value="ENSMUSP00000112411.2"/>
    <property type="gene ID" value="ENSMUSG00000023067.15"/>
</dbReference>
<dbReference type="Ensembl" id="ENSMUST00000233296.2">
    <property type="protein sequence ID" value="ENSMUSP00000156559.2"/>
    <property type="gene ID" value="ENSMUSG00000023067.15"/>
</dbReference>
<dbReference type="GeneID" id="12575"/>
<dbReference type="KEGG" id="mmu:12575"/>
<dbReference type="UCSC" id="uc008bsg.2">
    <property type="organism name" value="mouse"/>
</dbReference>
<dbReference type="AGR" id="MGI:104556"/>
<dbReference type="CTD" id="1026"/>
<dbReference type="MGI" id="MGI:104556">
    <property type="gene designation" value="Cdkn1a"/>
</dbReference>
<dbReference type="VEuPathDB" id="HostDB:ENSMUSG00000023067"/>
<dbReference type="eggNOG" id="KOG4743">
    <property type="taxonomic scope" value="Eukaryota"/>
</dbReference>
<dbReference type="GeneTree" id="ENSGT00940000159918"/>
<dbReference type="HOGENOM" id="CLU_077692_1_1_1"/>
<dbReference type="InParanoid" id="P39689"/>
<dbReference type="OMA" id="NFAWERV"/>
<dbReference type="OrthoDB" id="9940972at2759"/>
<dbReference type="PhylomeDB" id="P39689"/>
<dbReference type="TreeFam" id="TF101038"/>
<dbReference type="Reactome" id="R-MMU-187577">
    <property type="pathway name" value="SCF(Skp2)-mediated degradation of p27/p21"/>
</dbReference>
<dbReference type="Reactome" id="R-MMU-198323">
    <property type="pathway name" value="AKT phosphorylates targets in the cytosol"/>
</dbReference>
<dbReference type="Reactome" id="R-MMU-2559582">
    <property type="pathway name" value="Senescence-Associated Secretory Phenotype (SASP)"/>
</dbReference>
<dbReference type="Reactome" id="R-MMU-2559586">
    <property type="pathway name" value="DNA Damage/Telomere Stress Induced Senescence"/>
</dbReference>
<dbReference type="Reactome" id="R-MMU-6804116">
    <property type="pathway name" value="TP53 Regulates Transcription of Genes Involved in G1 Cell Cycle Arrest"/>
</dbReference>
<dbReference type="Reactome" id="R-MMU-69202">
    <property type="pathway name" value="Cyclin E associated events during G1/S transition"/>
</dbReference>
<dbReference type="Reactome" id="R-MMU-69231">
    <property type="pathway name" value="Cyclin D associated events in G1"/>
</dbReference>
<dbReference type="Reactome" id="R-MMU-69563">
    <property type="pathway name" value="p53-Dependent G1 DNA Damage Response"/>
</dbReference>
<dbReference type="Reactome" id="R-MMU-69656">
    <property type="pathway name" value="Cyclin A:Cdk2-associated events at S phase entry"/>
</dbReference>
<dbReference type="Reactome" id="R-MMU-8852276">
    <property type="pathway name" value="The role of GTSE1 in G2/M progression after G2 checkpoint"/>
</dbReference>
<dbReference type="Reactome" id="R-MMU-9616222">
    <property type="pathway name" value="Transcriptional regulation of granulopoiesis"/>
</dbReference>
<dbReference type="BioGRID-ORCS" id="12575">
    <property type="hits" value="9 hits in 83 CRISPR screens"/>
</dbReference>
<dbReference type="ChiTaRS" id="Cdkn1a">
    <property type="organism name" value="mouse"/>
</dbReference>
<dbReference type="PRO" id="PR:P39689"/>
<dbReference type="Proteomes" id="UP000000589">
    <property type="component" value="Chromosome 17"/>
</dbReference>
<dbReference type="RNAct" id="P39689">
    <property type="molecule type" value="protein"/>
</dbReference>
<dbReference type="Bgee" id="ENSMUSG00000023067">
    <property type="expression patterns" value="Expressed in stroma of bone marrow and 262 other cell types or tissues"/>
</dbReference>
<dbReference type="ExpressionAtlas" id="P39689">
    <property type="expression patterns" value="baseline and differential"/>
</dbReference>
<dbReference type="GO" id="GO:0000307">
    <property type="term" value="C:cyclin-dependent protein kinase holoenzyme complex"/>
    <property type="evidence" value="ECO:0000353"/>
    <property type="project" value="MGI"/>
</dbReference>
<dbReference type="GO" id="GO:0005737">
    <property type="term" value="C:cytoplasm"/>
    <property type="evidence" value="ECO:0000314"/>
    <property type="project" value="UniProtKB"/>
</dbReference>
<dbReference type="GO" id="GO:0005829">
    <property type="term" value="C:cytosol"/>
    <property type="evidence" value="ECO:0000314"/>
    <property type="project" value="MGI"/>
</dbReference>
<dbReference type="GO" id="GO:0016604">
    <property type="term" value="C:nuclear body"/>
    <property type="evidence" value="ECO:0007669"/>
    <property type="project" value="Ensembl"/>
</dbReference>
<dbReference type="GO" id="GO:0005730">
    <property type="term" value="C:nucleolus"/>
    <property type="evidence" value="ECO:0000266"/>
    <property type="project" value="MGI"/>
</dbReference>
<dbReference type="GO" id="GO:0005654">
    <property type="term" value="C:nucleoplasm"/>
    <property type="evidence" value="ECO:0000266"/>
    <property type="project" value="MGI"/>
</dbReference>
<dbReference type="GO" id="GO:0005634">
    <property type="term" value="C:nucleus"/>
    <property type="evidence" value="ECO:0000314"/>
    <property type="project" value="UniProtKB"/>
</dbReference>
<dbReference type="GO" id="GO:0070557">
    <property type="term" value="C:PCNA-p21 complex"/>
    <property type="evidence" value="ECO:0000250"/>
    <property type="project" value="UniProtKB"/>
</dbReference>
<dbReference type="GO" id="GO:0032991">
    <property type="term" value="C:protein-containing complex"/>
    <property type="evidence" value="ECO:0000266"/>
    <property type="project" value="MGI"/>
</dbReference>
<dbReference type="GO" id="GO:0030332">
    <property type="term" value="F:cyclin binding"/>
    <property type="evidence" value="ECO:0000314"/>
    <property type="project" value="BHF-UCL"/>
</dbReference>
<dbReference type="GO" id="GO:0019912">
    <property type="term" value="F:cyclin-dependent protein kinase activating kinase activity"/>
    <property type="evidence" value="ECO:0007669"/>
    <property type="project" value="Ensembl"/>
</dbReference>
<dbReference type="GO" id="GO:0004861">
    <property type="term" value="F:cyclin-dependent protein serine/threonine kinase inhibitor activity"/>
    <property type="evidence" value="ECO:0000314"/>
    <property type="project" value="MGI"/>
</dbReference>
<dbReference type="GO" id="GO:0140311">
    <property type="term" value="F:protein sequestering activity"/>
    <property type="evidence" value="ECO:0007669"/>
    <property type="project" value="Ensembl"/>
</dbReference>
<dbReference type="GO" id="GO:0120283">
    <property type="term" value="F:protein serine/threonine kinase binding"/>
    <property type="evidence" value="ECO:0007669"/>
    <property type="project" value="Ensembl"/>
</dbReference>
<dbReference type="GO" id="GO:0044877">
    <property type="term" value="F:protein-containing complex binding"/>
    <property type="evidence" value="ECO:0007669"/>
    <property type="project" value="Ensembl"/>
</dbReference>
<dbReference type="GO" id="GO:0031625">
    <property type="term" value="F:ubiquitin protein ligase binding"/>
    <property type="evidence" value="ECO:0007669"/>
    <property type="project" value="Ensembl"/>
</dbReference>
<dbReference type="GO" id="GO:0008270">
    <property type="term" value="F:zinc ion binding"/>
    <property type="evidence" value="ECO:0007669"/>
    <property type="project" value="UniProtKB-KW"/>
</dbReference>
<dbReference type="GO" id="GO:0034198">
    <property type="term" value="P:cellular response to amino acid starvation"/>
    <property type="evidence" value="ECO:0000315"/>
    <property type="project" value="UniProtKB"/>
</dbReference>
<dbReference type="GO" id="GO:0071460">
    <property type="term" value="P:cellular response to cell-matrix adhesion"/>
    <property type="evidence" value="ECO:0007669"/>
    <property type="project" value="Ensembl"/>
</dbReference>
<dbReference type="GO" id="GO:0071480">
    <property type="term" value="P:cellular response to gamma radiation"/>
    <property type="evidence" value="ECO:0000314"/>
    <property type="project" value="MGI"/>
</dbReference>
<dbReference type="GO" id="GO:0071493">
    <property type="term" value="P:cellular response to UV-B"/>
    <property type="evidence" value="ECO:0000314"/>
    <property type="project" value="UniProtKB"/>
</dbReference>
<dbReference type="GO" id="GO:0090398">
    <property type="term" value="P:cellular senescence"/>
    <property type="evidence" value="ECO:0000316"/>
    <property type="project" value="MGI"/>
</dbReference>
<dbReference type="GO" id="GO:0006974">
    <property type="term" value="P:DNA damage response"/>
    <property type="evidence" value="ECO:0000315"/>
    <property type="project" value="MGI"/>
</dbReference>
<dbReference type="GO" id="GO:0030330">
    <property type="term" value="P:DNA damage response, signal transduction by p53 class mediator"/>
    <property type="evidence" value="ECO:0000314"/>
    <property type="project" value="MGI"/>
</dbReference>
<dbReference type="GO" id="GO:0008544">
    <property type="term" value="P:epidermis development"/>
    <property type="evidence" value="ECO:0000316"/>
    <property type="project" value="MGI"/>
</dbReference>
<dbReference type="GO" id="GO:0048144">
    <property type="term" value="P:fibroblast proliferation"/>
    <property type="evidence" value="ECO:0000316"/>
    <property type="project" value="MGI"/>
</dbReference>
<dbReference type="GO" id="GO:0007507">
    <property type="term" value="P:heart development"/>
    <property type="evidence" value="ECO:0000315"/>
    <property type="project" value="BHF-UCL"/>
</dbReference>
<dbReference type="GO" id="GO:0001701">
    <property type="term" value="P:in utero embryonic development"/>
    <property type="evidence" value="ECO:0000316"/>
    <property type="project" value="MGI"/>
</dbReference>
<dbReference type="GO" id="GO:0042771">
    <property type="term" value="P:intrinsic apoptotic signaling pathway in response to DNA damage by p53 class mediator"/>
    <property type="evidence" value="ECO:0000315"/>
    <property type="project" value="MGI"/>
</dbReference>
<dbReference type="GO" id="GO:0030216">
    <property type="term" value="P:keratinocyte differentiation"/>
    <property type="evidence" value="ECO:0000316"/>
    <property type="project" value="MGI"/>
</dbReference>
<dbReference type="GO" id="GO:0043616">
    <property type="term" value="P:keratinocyte proliferation"/>
    <property type="evidence" value="ECO:0000316"/>
    <property type="project" value="MGI"/>
</dbReference>
<dbReference type="GO" id="GO:0031571">
    <property type="term" value="P:mitotic G1 DNA damage checkpoint signaling"/>
    <property type="evidence" value="ECO:0007669"/>
    <property type="project" value="Ensembl"/>
</dbReference>
<dbReference type="GO" id="GO:0007095">
    <property type="term" value="P:mitotic G2 DNA damage checkpoint signaling"/>
    <property type="evidence" value="ECO:0000250"/>
    <property type="project" value="UniProtKB"/>
</dbReference>
<dbReference type="GO" id="GO:1905179">
    <property type="term" value="P:negative regulation of cardiac muscle tissue regeneration"/>
    <property type="evidence" value="ECO:0000315"/>
    <property type="project" value="BHF-UCL"/>
</dbReference>
<dbReference type="GO" id="GO:0030308">
    <property type="term" value="P:negative regulation of cell growth"/>
    <property type="evidence" value="ECO:0007669"/>
    <property type="project" value="Ensembl"/>
</dbReference>
<dbReference type="GO" id="GO:0008285">
    <property type="term" value="P:negative regulation of cell population proliferation"/>
    <property type="evidence" value="ECO:0000315"/>
    <property type="project" value="MGI"/>
</dbReference>
<dbReference type="GO" id="GO:2000279">
    <property type="term" value="P:negative regulation of DNA biosynthetic process"/>
    <property type="evidence" value="ECO:0007669"/>
    <property type="project" value="Ensembl"/>
</dbReference>
<dbReference type="GO" id="GO:2000134">
    <property type="term" value="P:negative regulation of G1/S transition of mitotic cell cycle"/>
    <property type="evidence" value="ECO:0000266"/>
    <property type="project" value="MGI"/>
</dbReference>
<dbReference type="GO" id="GO:0010629">
    <property type="term" value="P:negative regulation of gene expression"/>
    <property type="evidence" value="ECO:0000315"/>
    <property type="project" value="MGI"/>
</dbReference>
<dbReference type="GO" id="GO:1904706">
    <property type="term" value="P:negative regulation of vascular associated smooth muscle cell proliferation"/>
    <property type="evidence" value="ECO:0007669"/>
    <property type="project" value="Ensembl"/>
</dbReference>
<dbReference type="GO" id="GO:0090402">
    <property type="term" value="P:oncogene-induced cell senescence"/>
    <property type="evidence" value="ECO:0000315"/>
    <property type="project" value="MGI"/>
</dbReference>
<dbReference type="GO" id="GO:0030890">
    <property type="term" value="P:positive regulation of B cell proliferation"/>
    <property type="evidence" value="ECO:0000316"/>
    <property type="project" value="MGI"/>
</dbReference>
<dbReference type="GO" id="GO:0048146">
    <property type="term" value="P:positive regulation of fibroblast proliferation"/>
    <property type="evidence" value="ECO:0007669"/>
    <property type="project" value="Ensembl"/>
</dbReference>
<dbReference type="GO" id="GO:0043068">
    <property type="term" value="P:positive regulation of programmed cell death"/>
    <property type="evidence" value="ECO:0000315"/>
    <property type="project" value="MGI"/>
</dbReference>
<dbReference type="GO" id="GO:2000379">
    <property type="term" value="P:positive regulation of reactive oxygen species metabolic process"/>
    <property type="evidence" value="ECO:0007669"/>
    <property type="project" value="Ensembl"/>
</dbReference>
<dbReference type="GO" id="GO:0006606">
    <property type="term" value="P:protein import into nucleus"/>
    <property type="evidence" value="ECO:0000315"/>
    <property type="project" value="MGI"/>
</dbReference>
<dbReference type="GO" id="GO:0007265">
    <property type="term" value="P:Ras protein signal transduction"/>
    <property type="evidence" value="ECO:0007669"/>
    <property type="project" value="Ensembl"/>
</dbReference>
<dbReference type="GO" id="GO:0051726">
    <property type="term" value="P:regulation of cell cycle"/>
    <property type="evidence" value="ECO:0000314"/>
    <property type="project" value="MGI"/>
</dbReference>
<dbReference type="GO" id="GO:1902806">
    <property type="term" value="P:regulation of cell cycle G1/S phase transition"/>
    <property type="evidence" value="ECO:0000250"/>
    <property type="project" value="UniProtKB"/>
</dbReference>
<dbReference type="GO" id="GO:2000278">
    <property type="term" value="P:regulation of DNA biosynthetic process"/>
    <property type="evidence" value="ECO:0000315"/>
    <property type="project" value="MGI"/>
</dbReference>
<dbReference type="GO" id="GO:0007346">
    <property type="term" value="P:regulation of mitotic cell cycle"/>
    <property type="evidence" value="ECO:0000314"/>
    <property type="project" value="MGI"/>
</dbReference>
<dbReference type="GO" id="GO:0009411">
    <property type="term" value="P:response to UV"/>
    <property type="evidence" value="ECO:0000315"/>
    <property type="project" value="MGI"/>
</dbReference>
<dbReference type="GO" id="GO:0042246">
    <property type="term" value="P:tissue regeneration"/>
    <property type="evidence" value="ECO:0000315"/>
    <property type="project" value="BHF-UCL"/>
</dbReference>
<dbReference type="GO" id="GO:0042060">
    <property type="term" value="P:wound healing"/>
    <property type="evidence" value="ECO:0000315"/>
    <property type="project" value="BHF-UCL"/>
</dbReference>
<dbReference type="FunFam" id="4.10.365.10:FF:000003">
    <property type="entry name" value="cyclin-dependent kinase inhibitor 1 isoform X1"/>
    <property type="match status" value="1"/>
</dbReference>
<dbReference type="Gene3D" id="4.10.365.10">
    <property type="entry name" value="p27"/>
    <property type="match status" value="1"/>
</dbReference>
<dbReference type="InterPro" id="IPR003175">
    <property type="entry name" value="CDI_dom"/>
</dbReference>
<dbReference type="InterPro" id="IPR044898">
    <property type="entry name" value="CDI_dom_sf"/>
</dbReference>
<dbReference type="InterPro" id="IPR029841">
    <property type="entry name" value="CDKN1A"/>
</dbReference>
<dbReference type="PANTHER" id="PTHR46778:SF1">
    <property type="entry name" value="CYCLIN-DEPENDENT KINASE INHIBITOR 1"/>
    <property type="match status" value="1"/>
</dbReference>
<dbReference type="PANTHER" id="PTHR46778">
    <property type="entry name" value="CYCLIN-DEPENDENT KINASE INHIBITOR 1-RELATED"/>
    <property type="match status" value="1"/>
</dbReference>
<dbReference type="Pfam" id="PF02234">
    <property type="entry name" value="CDI"/>
    <property type="match status" value="1"/>
</dbReference>
<sequence>MSNPGDVRPVPHRSKVCRCLFGPVDSEQLRRDCDALMAGCLQEARERWNFDFVTETPLEGNFVWERVRSLGLPKVYLSPGSRSRDDLGGDKRPSTSSALLQGPAPEDHVALSLSCTLVSERPEDSPGGPGTSQGRKRRQTSLTDFYHSKRRLVFCKRKP</sequence>
<keyword id="KW-0007">Acetylation</keyword>
<keyword id="KW-0131">Cell cycle</keyword>
<keyword id="KW-0963">Cytoplasm</keyword>
<keyword id="KW-0479">Metal-binding</keyword>
<keyword id="KW-0539">Nucleus</keyword>
<keyword id="KW-0597">Phosphoprotein</keyword>
<keyword id="KW-0649">Protein kinase inhibitor</keyword>
<keyword id="KW-1185">Reference proteome</keyword>
<keyword id="KW-0832">Ubl conjugation</keyword>
<keyword id="KW-0862">Zinc</keyword>
<keyword id="KW-0863">Zinc-finger</keyword>
<organism>
    <name type="scientific">Mus musculus</name>
    <name type="common">Mouse</name>
    <dbReference type="NCBI Taxonomy" id="10090"/>
    <lineage>
        <taxon>Eukaryota</taxon>
        <taxon>Metazoa</taxon>
        <taxon>Chordata</taxon>
        <taxon>Craniata</taxon>
        <taxon>Vertebrata</taxon>
        <taxon>Euteleostomi</taxon>
        <taxon>Mammalia</taxon>
        <taxon>Eutheria</taxon>
        <taxon>Euarchontoglires</taxon>
        <taxon>Glires</taxon>
        <taxon>Rodentia</taxon>
        <taxon>Myomorpha</taxon>
        <taxon>Muroidea</taxon>
        <taxon>Muridae</taxon>
        <taxon>Murinae</taxon>
        <taxon>Mus</taxon>
        <taxon>Mus</taxon>
    </lineage>
</organism>
<reference key="1">
    <citation type="journal article" date="1994" name="Oncogene">
        <title>Molecular cloning, sequencing, chromosomal localization and expression of mouse p21 (Waf1).</title>
        <authorList>
            <person name="Huppi K."/>
            <person name="Siwarski D."/>
            <person name="Dosik J."/>
            <person name="Michieli P."/>
            <person name="Chedid M."/>
            <person name="Reed S."/>
            <person name="Mock B."/>
            <person name="Givol D."/>
            <person name="Mushinski J.F."/>
        </authorList>
    </citation>
    <scope>NUCLEOTIDE SEQUENCE [MRNA]</scope>
    <source>
        <strain>BXSB</strain>
        <tissue>Spleen</tissue>
    </source>
</reference>
<reference key="2">
    <citation type="journal article" date="1995" name="Cancer Res.">
        <title>Topological control of p21WAF1/CIP1 expression in normal and neoplastic tissues.</title>
        <authorList>
            <person name="El-Deiry W.S."/>
            <person name="Tokino T."/>
            <person name="Waldman T."/>
            <person name="Velculescu V.E."/>
            <person name="Oliner J.D."/>
            <person name="Burell M."/>
            <person name="Hill D.E."/>
            <person name="Rees J.L."/>
            <person name="Hamilton S.R."/>
            <person name="Kinzler K.W."/>
            <person name="Vogelstein B."/>
        </authorList>
    </citation>
    <scope>NUCLEOTIDE SEQUENCE [MRNA]</scope>
</reference>
<reference key="3">
    <citation type="journal article" date="2004" name="Genome Res.">
        <title>The status, quality, and expansion of the NIH full-length cDNA project: the Mammalian Gene Collection (MGC).</title>
        <authorList>
            <consortium name="The MGC Project Team"/>
        </authorList>
    </citation>
    <scope>NUCLEOTIDE SEQUENCE [LARGE SCALE MRNA]</scope>
    <source>
        <strain>C57BL/6J</strain>
        <tissue>Mammary gland</tissue>
    </source>
</reference>
<reference key="4">
    <citation type="journal article" date="1993" name="Cell">
        <title>WAF1, a potential mediator of p53 tumor suppression.</title>
        <authorList>
            <person name="El-Deiry W.S."/>
            <person name="Tokino T."/>
            <person name="Velculescu V.E."/>
            <person name="Levy D.B."/>
            <person name="Parsons R."/>
            <person name="Trent J.M."/>
            <person name="Lin D."/>
            <person name="Mercer W.E."/>
            <person name="Kinzler K.W."/>
            <person name="Vogelstein B."/>
        </authorList>
    </citation>
    <scope>NUCLEOTIDE SEQUENCE [MRNA] OF 1-143</scope>
</reference>
<reference key="5">
    <citation type="journal article" date="2010" name="Oncogene">
        <title>An HDAC1-binding domain within FATS bridges p21 turnover to radiation-induced tumorigenesis.</title>
        <authorList>
            <person name="Li Z."/>
            <person name="Zhang Q."/>
            <person name="Mao J.H."/>
            <person name="Weise A."/>
            <person name="Mrasek K."/>
            <person name="Fan X."/>
            <person name="Zhang X."/>
            <person name="Liehr T."/>
            <person name="Lu K.H."/>
            <person name="Balmain A."/>
            <person name="Cai W.W."/>
        </authorList>
    </citation>
    <scope>INTERACTION WITH HDAC1</scope>
    <scope>SUBCELLULAR LOCATION</scope>
    <scope>ACETYLATION</scope>
</reference>
<reference key="6">
    <citation type="journal article" date="2014" name="PLoS Genet.">
        <title>A mouse model uncovers LKB1 as an UVB-induced DNA damage sensor mediating CDKN1A (p21WAF1/CIP1) degradation.</title>
        <authorList>
            <person name="Esteve-Puig R."/>
            <person name="Gil R."/>
            <person name="Gonzalez-Sanchez E."/>
            <person name="Bech-Serra J.J."/>
            <person name="Grueso J."/>
            <person name="Hernandez-Losa J."/>
            <person name="Moline T."/>
            <person name="Canals F."/>
            <person name="Ferrer B."/>
            <person name="Cortes J."/>
            <person name="Bastian B."/>
            <person name="Cajal S.R.Y."/>
            <person name="Martin-Caballero J."/>
            <person name="Flores J.M."/>
            <person name="Vivancos A."/>
            <person name="Garcia-Patos V."/>
            <person name="Recio J.A."/>
        </authorList>
    </citation>
    <scope>FUNCTION</scope>
    <scope>INTERACTION WITH STK11</scope>
    <scope>PHOSPHORYLATION AT SER-78 AND SER-141</scope>
</reference>
<reference key="7">
    <citation type="journal article" date="2023" name="Cell Rep.">
        <title>p53-independent tumor suppression by cell-cycle arrest via CREB/ATF transcription factor OASIS.</title>
        <authorList>
            <person name="Saito A."/>
            <person name="Kamikawa Y."/>
            <person name="Ito T."/>
            <person name="Matsuhisa K."/>
            <person name="Kaneko M."/>
            <person name="Okamoto T."/>
            <person name="Yoshimaru T."/>
            <person name="Matsushita Y."/>
            <person name="Katagiri T."/>
            <person name="Imaizumi K."/>
        </authorList>
    </citation>
    <scope>FUNCTION</scope>
</reference>
<reference key="8">
    <citation type="journal article" date="2023" name="Cell Rep.">
        <title>Plakophilin 3 facilitates G1/S phase transition and enhances proliferation by capturing RB protein in the cytoplasm and promoting EGFR signaling.</title>
        <authorList>
            <person name="Mueller L."/>
            <person name="Keil R."/>
            <person name="Hatzfeld M."/>
        </authorList>
    </citation>
    <scope>FUNCTION</scope>
    <scope>INTERACTION WITH PKP3</scope>
    <scope>SUBCELLULAR LOCATION</scope>
    <scope>TISSUE SPECIFICITY</scope>
</reference>
<feature type="initiator methionine" description="Removed" evidence="2">
    <location>
        <position position="1"/>
    </location>
</feature>
<feature type="chain" id="PRO_0000190080" description="Cyclin-dependent kinase inhibitor 1">
    <location>
        <begin position="2"/>
        <end position="159"/>
    </location>
</feature>
<feature type="zinc finger region" description="C4-type" evidence="3">
    <location>
        <begin position="12"/>
        <end position="40"/>
    </location>
</feature>
<feature type="region of interest" description="Required for binding cyclins" evidence="1">
    <location>
        <begin position="17"/>
        <end position="24"/>
    </location>
</feature>
<feature type="region of interest" description="Required for binding CDKs" evidence="1">
    <location>
        <begin position="53"/>
        <end position="58"/>
    </location>
</feature>
<feature type="region of interest" description="Disordered" evidence="4">
    <location>
        <begin position="78"/>
        <end position="106"/>
    </location>
</feature>
<feature type="region of interest" description="Disordered" evidence="4">
    <location>
        <begin position="118"/>
        <end position="142"/>
    </location>
</feature>
<feature type="region of interest" description="Interaction with TRIM39" evidence="2">
    <location>
        <begin position="147"/>
        <end position="159"/>
    </location>
</feature>
<feature type="short sequence motif" description="PIP-box K+4 motif">
    <location>
        <begin position="135"/>
        <end position="159"/>
    </location>
</feature>
<feature type="compositionally biased region" description="Basic and acidic residues" evidence="4">
    <location>
        <begin position="82"/>
        <end position="93"/>
    </location>
</feature>
<feature type="modified residue" description="N-acetylserine" evidence="2">
    <location>
        <position position="2"/>
    </location>
</feature>
<feature type="modified residue" description="Phosphoserine; by NUAK1" evidence="6">
    <location>
        <position position="78"/>
    </location>
</feature>
<feature type="modified residue" description="Phosphoserine; by GSK3-beta" evidence="2">
    <location>
        <position position="112"/>
    </location>
</feature>
<feature type="modified residue" description="Phosphoserine" evidence="2">
    <location>
        <position position="125"/>
    </location>
</feature>
<feature type="modified residue" description="Phosphothreonine; by PKA, PKB/AKT1, PIM1 and PIM2" evidence="2">
    <location>
        <position position="140"/>
    </location>
</feature>
<feature type="modified residue" description="Phosphoserine; by NUAK1" evidence="6">
    <location>
        <position position="141"/>
    </location>
</feature>
<feature type="cross-link" description="Glycyl serine ester (Ser-Gly) (interchain with G-Cter in ubiquitin)" evidence="1">
    <location>
        <position position="2"/>
    </location>
</feature>
<feature type="sequence conflict" description="In Ref. 4; no nucleotide entry." evidence="9" ref="4">
    <original>R</original>
    <variation>S</variation>
    <location>
        <position position="30"/>
    </location>
</feature>
<feature type="sequence conflict" description="In Ref. 4; no nucleotide entry." evidence="9" ref="4">
    <original>TP</original>
    <variation>RQ</variation>
    <location>
        <begin position="56"/>
        <end position="57"/>
    </location>
</feature>
<protein>
    <recommendedName>
        <fullName>Cyclin-dependent kinase inhibitor 1</fullName>
    </recommendedName>
    <alternativeName>
        <fullName>CDK-interacting protein 1</fullName>
    </alternativeName>
    <alternativeName>
        <fullName>Melanoma differentiation-associated protein</fullName>
    </alternativeName>
    <alternativeName>
        <fullName>p21</fullName>
    </alternativeName>
</protein>
<proteinExistence type="evidence at protein level"/>
<comment type="function">
    <text evidence="2 6">May be involved in p53/TP53 mediated inhibition of cellular proliferation in response to DNA damage. Binds to and inhibits cyclin-dependent kinase activity, preventing phosphorylation of critical cyclin-dependent kinase substrates and blocking cell cycle progression. Functions in the nuclear localization and assembly of cyclin D-CDK4 complex and promotes its kinase activity towards RB1. At higher stoichiometric ratios, inhibits the kinase activity of the cyclin D-CDK4 complex (PubMed:25329316). Inhibits DNA synthesis by DNA polymerase delta by competing with POLD3 for PCNA binding (By similarity). Plays an important role in controlling cell cycle progression and DNA damage-induced G2 arrest (By similarity).</text>
</comment>
<comment type="function">
    <text evidence="2 6 7 8">Plays an important role in controlling cell cycle progression and DNA damage-induced G2 arrest (PubMed:37178686). Involved in p53/TP53 mediated inhibition of cellular proliferation in response to DNA damage. Also involved in p53-independent DNA damage-induced G2 arrest mediated by CREB3L1 in astrocytes and osteoblasts (PubMed:37178686). Binds to and inhibits cyclin-dependent kinase activity, preventing phosphorylation of critical cyclin-dependent kinase substrates and blocking cell cycle progression. Functions in the nuclear localization and assembly of cyclin D-CDK4 complex and promotes its kinase activity towards RB1. At higher stoichiometric ratios, inhibits the kinase activity of the cyclin D-CDK4 complex (PubMed:25329316). Inhibits DNA synthesis by DNA polymerase delta by competing with POLD3 for PCNA binding (By similarity). Negatively regulates the CDK4- and CDK6-driven phosphorylation of RB1 in keratinocytes, thereby resulting in the release of E2F1 and subsequent transcription of E2F1-driven G1/S phase promoting genes (PubMed:36689330).</text>
</comment>
<comment type="subunit">
    <text evidence="2 5 6 7">Interacts with HDAC1; the interaction is prevented by competitive binding of C10orf90/FATS to HDAC1 facilitating acetylation and protein stabilization of CDKN1A/p21 (PubMed:20154723). Interacts with MKRN1. Interacts with PSMA3. Interacts with PCNA. Component of the ternary complex, cyclin D-CDK4-CDKN1A. Interacts (via its N-terminal domain) with CDK4; the interaction promotes the assembly of the cyclin D-CDK4 complex, its nuclear translocation and promotes the cyclin D-dependent enzyme activity of CDK4. Binding to CDK2 leads to CDK2/cyclin E inactivation at the G1-S phase DNA damage checkpoint, thereby arresting cells at the G1-S transition during DNA repair. Interacts with PIM1 (By similarity). Interacts with STK11 (PubMed:25329316). Interacts with NUAK1 (By similarity). Interacts with DTL and TRIM39 (By similarity). Interacts with PKP3; the interaction sequesters CDKN1A to the cytoplasm thereby repressing its role as an inhibitor of CDK4- and CDK6-driven RB1 phosphorylation (PubMed:36689330).</text>
</comment>
<comment type="interaction">
    <interactant intactId="EBI-1174103">
        <id>P39689</id>
    </interactant>
    <interactant intactId="EBI-1173616">
        <id>Q9Z111</id>
        <label>Gadd45g</label>
    </interactant>
    <organismsDiffer>false</organismsDiffer>
    <experiments>2</experiments>
</comment>
<comment type="interaction">
    <interactant intactId="EBI-1174103">
        <id>P39689</id>
    </interactant>
    <interactant intactId="EBI-1173716">
        <id>P17918</id>
        <label>Pcna</label>
    </interactant>
    <organismsDiffer>false</organismsDiffer>
    <experiments>2</experiments>
</comment>
<comment type="subcellular location">
    <subcellularLocation>
        <location evidence="7">Cytoplasm</location>
    </subcellularLocation>
    <subcellularLocation>
        <location evidence="5 7">Nucleus</location>
    </subcellularLocation>
</comment>
<comment type="tissue specificity">
    <text evidence="7">Expressed in keratinocytes (at protein level).</text>
</comment>
<comment type="induction">
    <text>By p53, mezerein (antileukemic compound) and interferon beta.</text>
</comment>
<comment type="domain">
    <text evidence="1">The C-terminal is required for nuclear localization of the cyclin D-CDK4 complex.</text>
</comment>
<comment type="domain">
    <text evidence="1">The PIP-box K+4 motif mediates both the interaction with PCNA and the recruitment of the DCX(DTL) complex: while the PIP-box interacts with PCNA, the presence of the K+4 submotif, recruits the DCX(DTL) complex, leading to its ubiquitination.</text>
</comment>
<comment type="PTM">
    <text evidence="2 6">Phosphorylation of Thr-140 or Ser-141 impairs binding to PCNA. Phosphorylation at Ser-112 by GSK3-beta enhances ubiquitination by the DCX(DTL) complex (By similarity). Phosphorylation of Thr-140 by PIM2 enhances its stability and inhibits cell proliferation. Phosphorylation of Thr-140 by PIM1 results in the relocation of CDKN1A to the cytoplasm and enhanced CDKN1A protein stability. UV radiation-induced phosphorylation at Ser-78 and Ser-141 by NUAK1 leads to its degradation.</text>
</comment>
<comment type="PTM">
    <text evidence="2">Ubiquitinated by MKRN1; leading to polyubiquitination and 26S proteasome-dependent degradation. Ubiquitinated by the DCX(DTL) complex, also named CRL4(CDT2) complex, leading to its degradation during S phase or following UV irradiation. Ubiquitination by the DCX(DTL) complex is essential to control replication licensing and is PCNA-dependent: interacts with PCNA via its PIP-box, while the presence of the containing the 'K+4' motif in the PIP box, recruit the DCX(DTL) complex, leading to its degradation. Ubiquitination at Ser-2 leads to degradation by the proteasome pathway. Ubiquitinated by RNF114; leading to proteasomal degradation (By similarity).</text>
</comment>
<comment type="PTM">
    <text evidence="5">Acetylation leads to protein stability. Acetylated in vitro on Lys-136, Lys-149, Lys-156 and Lys-158. Deacetylation by HDAC1 is prevented by competitive binding of C10orf90/FATS to HDAC1.</text>
</comment>
<comment type="similarity">
    <text evidence="9">Belongs to the CDI family.</text>
</comment>
<evidence type="ECO:0000250" key="1"/>
<evidence type="ECO:0000250" key="2">
    <source>
        <dbReference type="UniProtKB" id="P38936"/>
    </source>
</evidence>
<evidence type="ECO:0000255" key="3"/>
<evidence type="ECO:0000256" key="4">
    <source>
        <dbReference type="SAM" id="MobiDB-lite"/>
    </source>
</evidence>
<evidence type="ECO:0000269" key="5">
    <source>
    </source>
</evidence>
<evidence type="ECO:0000269" key="6">
    <source>
    </source>
</evidence>
<evidence type="ECO:0000269" key="7">
    <source>
    </source>
</evidence>
<evidence type="ECO:0000269" key="8">
    <source>
    </source>
</evidence>
<evidence type="ECO:0000305" key="9"/>
<gene>
    <name type="primary">Cdkn1a</name>
    <name type="synonym">Cip1</name>
    <name type="synonym">Waf1</name>
</gene>
<name>CDN1A_MOUSE</name>